<evidence type="ECO:0000255" key="1"/>
<evidence type="ECO:0000256" key="2">
    <source>
        <dbReference type="SAM" id="MobiDB-lite"/>
    </source>
</evidence>
<evidence type="ECO:0000269" key="3">
    <source>
    </source>
</evidence>
<evidence type="ECO:0000303" key="4">
    <source>
    </source>
</evidence>
<evidence type="ECO:0000305" key="5"/>
<evidence type="ECO:0000305" key="6">
    <source>
    </source>
</evidence>
<evidence type="ECO:0000312" key="7">
    <source>
        <dbReference type="Araport" id="AT4G38360"/>
    </source>
</evidence>
<evidence type="ECO:0000312" key="8">
    <source>
        <dbReference type="EMBL" id="CAB37492.1"/>
    </source>
</evidence>
<evidence type="ECO:0000312" key="9">
    <source>
        <dbReference type="Proteomes" id="UP000006548"/>
    </source>
</evidence>
<keyword id="KW-0025">Alternative splicing</keyword>
<keyword id="KW-1003">Cell membrane</keyword>
<keyword id="KW-0175">Coiled coil</keyword>
<keyword id="KW-0963">Cytoplasm</keyword>
<keyword id="KW-0472">Membrane</keyword>
<keyword id="KW-1185">Reference proteome</keyword>
<keyword id="KW-0812">Transmembrane</keyword>
<keyword id="KW-1133">Transmembrane helix</keyword>
<organism evidence="9">
    <name type="scientific">Arabidopsis thaliana</name>
    <name type="common">Mouse-ear cress</name>
    <dbReference type="NCBI Taxonomy" id="3702"/>
    <lineage>
        <taxon>Eukaryota</taxon>
        <taxon>Viridiplantae</taxon>
        <taxon>Streptophyta</taxon>
        <taxon>Embryophyta</taxon>
        <taxon>Tracheophyta</taxon>
        <taxon>Spermatophyta</taxon>
        <taxon>Magnoliopsida</taxon>
        <taxon>eudicotyledons</taxon>
        <taxon>Gunneridae</taxon>
        <taxon>Pentapetalae</taxon>
        <taxon>rosids</taxon>
        <taxon>malvids</taxon>
        <taxon>Brassicales</taxon>
        <taxon>Brassicaceae</taxon>
        <taxon>Camelineae</taxon>
        <taxon>Arabidopsis</taxon>
    </lineage>
</organism>
<protein>
    <recommendedName>
        <fullName evidence="4">Protein LAZ1</fullName>
    </recommendedName>
    <alternativeName>
        <fullName evidence="4">Lazarus1</fullName>
    </alternativeName>
</protein>
<proteinExistence type="evidence at protein level"/>
<feature type="chain" id="PRO_0000432837" description="Protein LAZ1">
    <location>
        <begin position="1"/>
        <end position="485"/>
    </location>
</feature>
<feature type="topological domain" description="Cytoplasmic" evidence="6">
    <location>
        <begin position="1"/>
        <end position="19"/>
    </location>
</feature>
<feature type="transmembrane region" description="Helical; Name=1" evidence="1">
    <location>
        <begin position="20"/>
        <end position="40"/>
    </location>
</feature>
<feature type="topological domain" description="Lumenal" evidence="6">
    <location>
        <begin position="41"/>
        <end position="53"/>
    </location>
</feature>
<feature type="transmembrane region" description="Helical; Name=2" evidence="1">
    <location>
        <begin position="54"/>
        <end position="74"/>
    </location>
</feature>
<feature type="topological domain" description="Cytoplasmic" evidence="6">
    <location>
        <begin position="75"/>
        <end position="167"/>
    </location>
</feature>
<feature type="transmembrane region" description="Helical; Name=3" evidence="1">
    <location>
        <begin position="168"/>
        <end position="188"/>
    </location>
</feature>
<feature type="topological domain" description="Lumenal" evidence="6">
    <location>
        <begin position="189"/>
        <end position="196"/>
    </location>
</feature>
<feature type="transmembrane region" description="Helical; Name=4" evidence="1">
    <location>
        <begin position="197"/>
        <end position="217"/>
    </location>
</feature>
<feature type="topological domain" description="Cytoplasmic" evidence="6">
    <location>
        <begin position="218"/>
        <end position="241"/>
    </location>
</feature>
<feature type="transmembrane region" description="Helical; Name=5" evidence="1">
    <location>
        <begin position="242"/>
        <end position="262"/>
    </location>
</feature>
<feature type="topological domain" description="Lumenal" evidence="6">
    <location>
        <begin position="263"/>
        <end position="277"/>
    </location>
</feature>
<feature type="transmembrane region" description="Helical; Name=6" evidence="1">
    <location>
        <begin position="278"/>
        <end position="298"/>
    </location>
</feature>
<feature type="topological domain" description="Cytoplasmic" evidence="6">
    <location>
        <begin position="299"/>
        <end position="485"/>
    </location>
</feature>
<feature type="region of interest" description="Disordered" evidence="2">
    <location>
        <begin position="400"/>
        <end position="485"/>
    </location>
</feature>
<feature type="coiled-coil region" evidence="1">
    <location>
        <begin position="384"/>
        <end position="415"/>
    </location>
</feature>
<feature type="compositionally biased region" description="Basic and acidic residues" evidence="2">
    <location>
        <begin position="403"/>
        <end position="416"/>
    </location>
</feature>
<feature type="compositionally biased region" description="Polar residues" evidence="2">
    <location>
        <begin position="455"/>
        <end position="469"/>
    </location>
</feature>
<feature type="compositionally biased region" description="Basic and acidic residues" evidence="2">
    <location>
        <begin position="476"/>
        <end position="485"/>
    </location>
</feature>
<feature type="splice variant" id="VSP_057592" description="In isoform 2.">
    <original>MGIASVVHLYVFPAKPYGLM</original>
    <variation>CRWVLLPLFTCMYSQQSLMV</variation>
    <location>
        <begin position="285"/>
        <end position="304"/>
    </location>
</feature>
<feature type="splice variant" id="VSP_057593" description="In isoform 2.">
    <location>
        <begin position="305"/>
        <end position="485"/>
    </location>
</feature>
<feature type="mutagenesis site" description="In laz1-4; Altered subcellular localization and reduced activity." evidence="3">
    <original>D</original>
    <variation>N</variation>
    <location>
        <position position="360"/>
    </location>
</feature>
<dbReference type="EMBL" id="AL035539">
    <property type="protein sequence ID" value="CAB37492.1"/>
    <property type="status" value="ALT_SEQ"/>
    <property type="molecule type" value="Genomic_DNA"/>
</dbReference>
<dbReference type="EMBL" id="AL161593">
    <property type="protein sequence ID" value="CAB80501.1"/>
    <property type="status" value="ALT_SEQ"/>
    <property type="molecule type" value="Genomic_DNA"/>
</dbReference>
<dbReference type="EMBL" id="CP002687">
    <property type="protein sequence ID" value="AEE86918.1"/>
    <property type="molecule type" value="Genomic_DNA"/>
</dbReference>
<dbReference type="EMBL" id="CP002687">
    <property type="protein sequence ID" value="AEE86919.1"/>
    <property type="molecule type" value="Genomic_DNA"/>
</dbReference>
<dbReference type="EMBL" id="AY046005">
    <property type="protein sequence ID" value="AAK76679.1"/>
    <property type="molecule type" value="mRNA"/>
</dbReference>
<dbReference type="EMBL" id="AY079383">
    <property type="protein sequence ID" value="AAL85114.1"/>
    <property type="molecule type" value="mRNA"/>
</dbReference>
<dbReference type="PIR" id="T05664">
    <property type="entry name" value="T05664"/>
</dbReference>
<dbReference type="RefSeq" id="NP_568039.1">
    <molecule id="F4JTN2-2"/>
    <property type="nucleotide sequence ID" value="NM_119998.2"/>
</dbReference>
<dbReference type="RefSeq" id="NP_974706.1">
    <molecule id="F4JTN2-1"/>
    <property type="nucleotide sequence ID" value="NM_202977.1"/>
</dbReference>
<dbReference type="FunCoup" id="F4JTN2">
    <property type="interactions" value="3095"/>
</dbReference>
<dbReference type="STRING" id="3702.F4JTN2"/>
<dbReference type="iPTMnet" id="F4JTN2"/>
<dbReference type="PaxDb" id="3702-AT4G38360.2"/>
<dbReference type="ProteomicsDB" id="238555">
    <molecule id="F4JTN2-1"/>
</dbReference>
<dbReference type="EnsemblPlants" id="AT4G38360.1">
    <molecule id="F4JTN2-2"/>
    <property type="protein sequence ID" value="AT4G38360.1"/>
    <property type="gene ID" value="AT4G38360"/>
</dbReference>
<dbReference type="EnsemblPlants" id="AT4G38360.2">
    <molecule id="F4JTN2-1"/>
    <property type="protein sequence ID" value="AT4G38360.2"/>
    <property type="gene ID" value="AT4G38360"/>
</dbReference>
<dbReference type="GeneID" id="829993"/>
<dbReference type="Gramene" id="AT4G38360.1">
    <molecule id="F4JTN2-2"/>
    <property type="protein sequence ID" value="AT4G38360.1"/>
    <property type="gene ID" value="AT4G38360"/>
</dbReference>
<dbReference type="Gramene" id="AT4G38360.2">
    <molecule id="F4JTN2-1"/>
    <property type="protein sequence ID" value="AT4G38360.2"/>
    <property type="gene ID" value="AT4G38360"/>
</dbReference>
<dbReference type="KEGG" id="ath:AT4G38360"/>
<dbReference type="Araport" id="AT4G38360"/>
<dbReference type="TAIR" id="AT4G38360">
    <property type="gene designation" value="LAZ1"/>
</dbReference>
<dbReference type="eggNOG" id="KOG2641">
    <property type="taxonomic scope" value="Eukaryota"/>
</dbReference>
<dbReference type="HOGENOM" id="CLU_012923_0_0_1"/>
<dbReference type="InParanoid" id="F4JTN2"/>
<dbReference type="OMA" id="RYLWECK"/>
<dbReference type="OrthoDB" id="5348404at2759"/>
<dbReference type="PRO" id="PR:F4JTN2"/>
<dbReference type="Proteomes" id="UP000006548">
    <property type="component" value="Chromosome 4"/>
</dbReference>
<dbReference type="ExpressionAtlas" id="F4JTN2">
    <property type="expression patterns" value="baseline and differential"/>
</dbReference>
<dbReference type="GO" id="GO:0005829">
    <property type="term" value="C:cytosol"/>
    <property type="evidence" value="ECO:0000314"/>
    <property type="project" value="UniProtKB"/>
</dbReference>
<dbReference type="GO" id="GO:0012505">
    <property type="term" value="C:endomembrane system"/>
    <property type="evidence" value="ECO:0007669"/>
    <property type="project" value="UniProtKB-SubCell"/>
</dbReference>
<dbReference type="GO" id="GO:0016020">
    <property type="term" value="C:membrane"/>
    <property type="evidence" value="ECO:0000314"/>
    <property type="project" value="UniProtKB"/>
</dbReference>
<dbReference type="GO" id="GO:0009705">
    <property type="term" value="C:plant-type vacuole membrane"/>
    <property type="evidence" value="ECO:0000314"/>
    <property type="project" value="TAIR"/>
</dbReference>
<dbReference type="GO" id="GO:0005886">
    <property type="term" value="C:plasma membrane"/>
    <property type="evidence" value="ECO:0007669"/>
    <property type="project" value="UniProtKB-SubCell"/>
</dbReference>
<dbReference type="GO" id="GO:1900458">
    <property type="term" value="P:negative regulation of brassinosteroid mediated signaling pathway"/>
    <property type="evidence" value="ECO:0000316"/>
    <property type="project" value="TAIR"/>
</dbReference>
<dbReference type="GO" id="GO:0012501">
    <property type="term" value="P:programmed cell death"/>
    <property type="evidence" value="ECO:0000315"/>
    <property type="project" value="UniProtKB"/>
</dbReference>
<dbReference type="GO" id="GO:0007033">
    <property type="term" value="P:vacuole organization"/>
    <property type="evidence" value="ECO:0000316"/>
    <property type="project" value="TAIR"/>
</dbReference>
<dbReference type="GO" id="GO:0098876">
    <property type="term" value="P:vesicle-mediated transport to the plasma membrane"/>
    <property type="evidence" value="ECO:0000316"/>
    <property type="project" value="TAIR"/>
</dbReference>
<dbReference type="InterPro" id="IPR005178">
    <property type="entry name" value="Ostalpha/TMEM184C"/>
</dbReference>
<dbReference type="PANTHER" id="PTHR23423">
    <property type="entry name" value="ORGANIC SOLUTE TRANSPORTER-RELATED"/>
    <property type="match status" value="1"/>
</dbReference>
<dbReference type="Pfam" id="PF03619">
    <property type="entry name" value="Solute_trans_a"/>
    <property type="match status" value="1"/>
</dbReference>
<dbReference type="SMART" id="SM01417">
    <property type="entry name" value="Solute_trans_a"/>
    <property type="match status" value="1"/>
</dbReference>
<comment type="function">
    <text evidence="3">Required for programmed cell death (PCD) associated with hypersensitive response (HR). Involved both in the induction of EDS1/PAD4 mediated HR and in accelerated cell death in the acd11 mutant. Not required for HR induction elicited through pathways exclusively dependent on CC-NB-LRR resistance proteins.</text>
</comment>
<comment type="subcellular location">
    <subcellularLocation>
        <location evidence="3">Endomembrane system</location>
        <topology evidence="3">Multi-pass membrane protein</topology>
    </subcellularLocation>
    <subcellularLocation>
        <location evidence="3">Cell membrane</location>
        <topology evidence="3">Multi-pass membrane protein</topology>
    </subcellularLocation>
    <subcellularLocation>
        <location evidence="3">Cytoplasm</location>
        <location evidence="3">Cytosol</location>
    </subcellularLocation>
</comment>
<comment type="alternative products">
    <event type="alternative splicing"/>
    <isoform>
        <id>F4JTN2-1</id>
        <name>1</name>
        <sequence type="displayed"/>
    </isoform>
    <isoform>
        <id>F4JTN2-2</id>
        <name>2</name>
        <sequence type="described" ref="VSP_057592 VSP_057593"/>
    </isoform>
</comment>
<comment type="disruption phenotype">
    <text evidence="3">Suppresses acd11-dependent cell death. Laz1 acd11 double mutants survive throughout development to flower and set seeds, in contrast to the fate of acd11.</text>
</comment>
<comment type="similarity">
    <text evidence="5">Belongs to the TMEM184 family.</text>
</comment>
<comment type="sequence caution" evidence="5">
    <conflict type="erroneous gene model prediction">
        <sequence resource="EMBL-CDS" id="CAB37492"/>
    </conflict>
</comment>
<comment type="sequence caution" evidence="5">
    <conflict type="erroneous gene model prediction">
        <sequence resource="EMBL-CDS" id="CAB80501"/>
    </conflict>
</comment>
<reference key="1">
    <citation type="journal article" date="1999" name="Nature">
        <title>Sequence and analysis of chromosome 4 of the plant Arabidopsis thaliana.</title>
        <authorList>
            <person name="Mayer K.F.X."/>
            <person name="Schueller C."/>
            <person name="Wambutt R."/>
            <person name="Murphy G."/>
            <person name="Volckaert G."/>
            <person name="Pohl T."/>
            <person name="Duesterhoeft A."/>
            <person name="Stiekema W."/>
            <person name="Entian K.-D."/>
            <person name="Terryn N."/>
            <person name="Harris B."/>
            <person name="Ansorge W."/>
            <person name="Brandt P."/>
            <person name="Grivell L.A."/>
            <person name="Rieger M."/>
            <person name="Weichselgartner M."/>
            <person name="de Simone V."/>
            <person name="Obermaier B."/>
            <person name="Mache R."/>
            <person name="Mueller M."/>
            <person name="Kreis M."/>
            <person name="Delseny M."/>
            <person name="Puigdomenech P."/>
            <person name="Watson M."/>
            <person name="Schmidtheini T."/>
            <person name="Reichert B."/>
            <person name="Portetelle D."/>
            <person name="Perez-Alonso M."/>
            <person name="Boutry M."/>
            <person name="Bancroft I."/>
            <person name="Vos P."/>
            <person name="Hoheisel J."/>
            <person name="Zimmermann W."/>
            <person name="Wedler H."/>
            <person name="Ridley P."/>
            <person name="Langham S.-A."/>
            <person name="McCullagh B."/>
            <person name="Bilham L."/>
            <person name="Robben J."/>
            <person name="van der Schueren J."/>
            <person name="Grymonprez B."/>
            <person name="Chuang Y.-J."/>
            <person name="Vandenbussche F."/>
            <person name="Braeken M."/>
            <person name="Weltjens I."/>
            <person name="Voet M."/>
            <person name="Bastiaens I."/>
            <person name="Aert R."/>
            <person name="Defoor E."/>
            <person name="Weitzenegger T."/>
            <person name="Bothe G."/>
            <person name="Ramsperger U."/>
            <person name="Hilbert H."/>
            <person name="Braun M."/>
            <person name="Holzer E."/>
            <person name="Brandt A."/>
            <person name="Peters S."/>
            <person name="van Staveren M."/>
            <person name="Dirkse W."/>
            <person name="Mooijman P."/>
            <person name="Klein Lankhorst R."/>
            <person name="Rose M."/>
            <person name="Hauf J."/>
            <person name="Koetter P."/>
            <person name="Berneiser S."/>
            <person name="Hempel S."/>
            <person name="Feldpausch M."/>
            <person name="Lamberth S."/>
            <person name="Van den Daele H."/>
            <person name="De Keyser A."/>
            <person name="Buysshaert C."/>
            <person name="Gielen J."/>
            <person name="Villarroel R."/>
            <person name="De Clercq R."/>
            <person name="van Montagu M."/>
            <person name="Rogers J."/>
            <person name="Cronin A."/>
            <person name="Quail M.A."/>
            <person name="Bray-Allen S."/>
            <person name="Clark L."/>
            <person name="Doggett J."/>
            <person name="Hall S."/>
            <person name="Kay M."/>
            <person name="Lennard N."/>
            <person name="McLay K."/>
            <person name="Mayes R."/>
            <person name="Pettett A."/>
            <person name="Rajandream M.A."/>
            <person name="Lyne M."/>
            <person name="Benes V."/>
            <person name="Rechmann S."/>
            <person name="Borkova D."/>
            <person name="Bloecker H."/>
            <person name="Scharfe M."/>
            <person name="Grimm M."/>
            <person name="Loehnert T.-H."/>
            <person name="Dose S."/>
            <person name="de Haan M."/>
            <person name="Maarse A.C."/>
            <person name="Schaefer M."/>
            <person name="Mueller-Auer S."/>
            <person name="Gabel C."/>
            <person name="Fuchs M."/>
            <person name="Fartmann B."/>
            <person name="Granderath K."/>
            <person name="Dauner D."/>
            <person name="Herzl A."/>
            <person name="Neumann S."/>
            <person name="Argiriou A."/>
            <person name="Vitale D."/>
            <person name="Liguori R."/>
            <person name="Piravandi E."/>
            <person name="Massenet O."/>
            <person name="Quigley F."/>
            <person name="Clabauld G."/>
            <person name="Muendlein A."/>
            <person name="Felber R."/>
            <person name="Schnabl S."/>
            <person name="Hiller R."/>
            <person name="Schmidt W."/>
            <person name="Lecharny A."/>
            <person name="Aubourg S."/>
            <person name="Chefdor F."/>
            <person name="Cooke R."/>
            <person name="Berger C."/>
            <person name="Monfort A."/>
            <person name="Casacuberta E."/>
            <person name="Gibbons T."/>
            <person name="Weber N."/>
            <person name="Vandenbol M."/>
            <person name="Bargues M."/>
            <person name="Terol J."/>
            <person name="Torres A."/>
            <person name="Perez-Perez A."/>
            <person name="Purnelle B."/>
            <person name="Bent E."/>
            <person name="Johnson S."/>
            <person name="Tacon D."/>
            <person name="Jesse T."/>
            <person name="Heijnen L."/>
            <person name="Schwarz S."/>
            <person name="Scholler P."/>
            <person name="Heber S."/>
            <person name="Francs P."/>
            <person name="Bielke C."/>
            <person name="Frishman D."/>
            <person name="Haase D."/>
            <person name="Lemcke K."/>
            <person name="Mewes H.-W."/>
            <person name="Stocker S."/>
            <person name="Zaccaria P."/>
            <person name="Bevan M."/>
            <person name="Wilson R.K."/>
            <person name="de la Bastide M."/>
            <person name="Habermann K."/>
            <person name="Parnell L."/>
            <person name="Dedhia N."/>
            <person name="Gnoj L."/>
            <person name="Schutz K."/>
            <person name="Huang E."/>
            <person name="Spiegel L."/>
            <person name="Sekhon M."/>
            <person name="Murray J."/>
            <person name="Sheet P."/>
            <person name="Cordes M."/>
            <person name="Abu-Threideh J."/>
            <person name="Stoneking T."/>
            <person name="Kalicki J."/>
            <person name="Graves T."/>
            <person name="Harmon G."/>
            <person name="Edwards J."/>
            <person name="Latreille P."/>
            <person name="Courtney L."/>
            <person name="Cloud J."/>
            <person name="Abbott A."/>
            <person name="Scott K."/>
            <person name="Johnson D."/>
            <person name="Minx P."/>
            <person name="Bentley D."/>
            <person name="Fulton B."/>
            <person name="Miller N."/>
            <person name="Greco T."/>
            <person name="Kemp K."/>
            <person name="Kramer J."/>
            <person name="Fulton L."/>
            <person name="Mardis E."/>
            <person name="Dante M."/>
            <person name="Pepin K."/>
            <person name="Hillier L.W."/>
            <person name="Nelson J."/>
            <person name="Spieth J."/>
            <person name="Ryan E."/>
            <person name="Andrews S."/>
            <person name="Geisel C."/>
            <person name="Layman D."/>
            <person name="Du H."/>
            <person name="Ali J."/>
            <person name="Berghoff A."/>
            <person name="Jones K."/>
            <person name="Drone K."/>
            <person name="Cotton M."/>
            <person name="Joshu C."/>
            <person name="Antonoiu B."/>
            <person name="Zidanic M."/>
            <person name="Strong C."/>
            <person name="Sun H."/>
            <person name="Lamar B."/>
            <person name="Yordan C."/>
            <person name="Ma P."/>
            <person name="Zhong J."/>
            <person name="Preston R."/>
            <person name="Vil D."/>
            <person name="Shekher M."/>
            <person name="Matero A."/>
            <person name="Shah R."/>
            <person name="Swaby I.K."/>
            <person name="O'Shaughnessy A."/>
            <person name="Rodriguez M."/>
            <person name="Hoffman J."/>
            <person name="Till S."/>
            <person name="Granat S."/>
            <person name="Shohdy N."/>
            <person name="Hasegawa A."/>
            <person name="Hameed A."/>
            <person name="Lodhi M."/>
            <person name="Johnson A."/>
            <person name="Chen E."/>
            <person name="Marra M.A."/>
            <person name="Martienssen R."/>
            <person name="McCombie W.R."/>
        </authorList>
    </citation>
    <scope>NUCLEOTIDE SEQUENCE [LARGE SCALE GENOMIC DNA]</scope>
    <source>
        <strain>cv. Columbia</strain>
    </source>
</reference>
<reference key="2">
    <citation type="journal article" date="2017" name="Plant J.">
        <title>Araport11: a complete reannotation of the Arabidopsis thaliana reference genome.</title>
        <authorList>
            <person name="Cheng C.Y."/>
            <person name="Krishnakumar V."/>
            <person name="Chan A.P."/>
            <person name="Thibaud-Nissen F."/>
            <person name="Schobel S."/>
            <person name="Town C.D."/>
        </authorList>
    </citation>
    <scope>GENOME REANNOTATION</scope>
    <source>
        <strain>cv. Columbia</strain>
    </source>
</reference>
<reference key="3">
    <citation type="journal article" date="2003" name="Science">
        <title>Empirical analysis of transcriptional activity in the Arabidopsis genome.</title>
        <authorList>
            <person name="Yamada K."/>
            <person name="Lim J."/>
            <person name="Dale J.M."/>
            <person name="Chen H."/>
            <person name="Shinn P."/>
            <person name="Palm C.J."/>
            <person name="Southwick A.M."/>
            <person name="Wu H.C."/>
            <person name="Kim C.J."/>
            <person name="Nguyen M."/>
            <person name="Pham P.K."/>
            <person name="Cheuk R.F."/>
            <person name="Karlin-Newmann G."/>
            <person name="Liu S.X."/>
            <person name="Lam B."/>
            <person name="Sakano H."/>
            <person name="Wu T."/>
            <person name="Yu G."/>
            <person name="Miranda M."/>
            <person name="Quach H.L."/>
            <person name="Tripp M."/>
            <person name="Chang C.H."/>
            <person name="Lee J.M."/>
            <person name="Toriumi M.J."/>
            <person name="Chan M.M."/>
            <person name="Tang C.C."/>
            <person name="Onodera C.S."/>
            <person name="Deng J.M."/>
            <person name="Akiyama K."/>
            <person name="Ansari Y."/>
            <person name="Arakawa T."/>
            <person name="Banh J."/>
            <person name="Banno F."/>
            <person name="Bowser L."/>
            <person name="Brooks S.Y."/>
            <person name="Carninci P."/>
            <person name="Chao Q."/>
            <person name="Choy N."/>
            <person name="Enju A."/>
            <person name="Goldsmith A.D."/>
            <person name="Gurjal M."/>
            <person name="Hansen N.F."/>
            <person name="Hayashizaki Y."/>
            <person name="Johnson-Hopson C."/>
            <person name="Hsuan V.W."/>
            <person name="Iida K."/>
            <person name="Karnes M."/>
            <person name="Khan S."/>
            <person name="Koesema E."/>
            <person name="Ishida J."/>
            <person name="Jiang P.X."/>
            <person name="Jones T."/>
            <person name="Kawai J."/>
            <person name="Kamiya A."/>
            <person name="Meyers C."/>
            <person name="Nakajima M."/>
            <person name="Narusaka M."/>
            <person name="Seki M."/>
            <person name="Sakurai T."/>
            <person name="Satou M."/>
            <person name="Tamse R."/>
            <person name="Vaysberg M."/>
            <person name="Wallender E.K."/>
            <person name="Wong C."/>
            <person name="Yamamura Y."/>
            <person name="Yuan S."/>
            <person name="Shinozaki K."/>
            <person name="Davis R.W."/>
            <person name="Theologis A."/>
            <person name="Ecker J.R."/>
        </authorList>
    </citation>
    <scope>NUCLEOTIDE SEQUENCE [LARGE SCALE MRNA] (ISOFORM 2)</scope>
    <source>
        <strain>cv. Columbia</strain>
    </source>
</reference>
<reference key="4">
    <citation type="journal article" date="2010" name="PLoS ONE">
        <title>Lazarus1, a DUF300 protein, contributes to programmed cell death associated with Arabidopsis acd11 and the hypersensitive response.</title>
        <authorList>
            <person name="Malinovsky F.G."/>
            <person name="Brodersen P."/>
            <person name="Fiil B.K."/>
            <person name="McKinney L.V."/>
            <person name="Thorgrimsen S."/>
            <person name="Beck M."/>
            <person name="Nielsen H.B."/>
            <person name="Pietra S."/>
            <person name="Zipfel C."/>
            <person name="Robatzek S."/>
            <person name="Petersen M."/>
            <person name="Hofius D."/>
            <person name="Mundy J."/>
        </authorList>
    </citation>
    <scope>FUNCTION</scope>
    <scope>DISRUPTION PHENOTYPE</scope>
    <scope>MUTAGENESIS OF ASP-360</scope>
    <scope>TOPOLOGY</scope>
    <scope>SUBCELLULAR LOCATION</scope>
    <scope>GENE FAMILY</scope>
</reference>
<name>LAZ1_ARATH</name>
<gene>
    <name evidence="4" type="primary">LAZ1</name>
    <name evidence="7" type="ordered locus">At4g38360</name>
    <name evidence="8" type="ORF">F22I13.130</name>
</gene>
<sequence>MDILKSYHLLAAAYSAPAWASFMAGAFLVLTLSLSLFLVFDHLSTYKNPEEQKFLIGVILMVPCYSIESFASLVKPSISVDCGILRDCYESFAMYCFGRYLVACIGGEERTIEFMERQGRKSFKTPLLDHKDEKGIIKHPFPMNLFLKPWRLSPWFYQVVKFGIVQYMIIKSLTALTALILEAFGVYCEGEFKWGCGYPYLAVVLNFSQSWALYCLVQFYGATKDELAHIQPLAKFLTFKSIVFLTWWQGVAIALLSSLGLFKSSIAQSLQLKTSVQDFIICIEMGIASVVHLYVFPAKPYGLMGDRFTGSVSVLGDYASVDCPIDPDEIRDSERPTKVRLPHPDVDIRSGMTIKESMRDVFVGGGEYIVKDVRFTVTQAVEPMEKSITKFNEKLHKISQNIKKHDKEKRRVKDDSCMSSSPSRRVIRGIDDPLLNGSFSDSGVTRTKKHRRKSGYTSAESGGESSSDQAYGGFEVRGRRWITKD</sequence>
<accession>F4JTN2</accession>
<accession>Q94AJ4</accession>
<accession>Q9SVE9</accession>